<name>NODI_BURTA</name>
<keyword id="KW-0067">ATP-binding</keyword>
<keyword id="KW-0997">Cell inner membrane</keyword>
<keyword id="KW-1003">Cell membrane</keyword>
<keyword id="KW-0472">Membrane</keyword>
<keyword id="KW-0536">Nodulation</keyword>
<keyword id="KW-0547">Nucleotide-binding</keyword>
<keyword id="KW-1278">Translocase</keyword>
<keyword id="KW-0813">Transport</keyword>
<gene>
    <name evidence="1" type="primary">nodI</name>
    <name type="ordered locus">BTH_I2485</name>
</gene>
<reference key="1">
    <citation type="journal article" date="2005" name="BMC Genomics">
        <title>Bacterial genome adaptation to niches: divergence of the potential virulence genes in three Burkholderia species of different survival strategies.</title>
        <authorList>
            <person name="Kim H.S."/>
            <person name="Schell M.A."/>
            <person name="Yu Y."/>
            <person name="Ulrich R.L."/>
            <person name="Sarria S.H."/>
            <person name="Nierman W.C."/>
            <person name="DeShazer D."/>
        </authorList>
    </citation>
    <scope>NUCLEOTIDE SEQUENCE [LARGE SCALE GENOMIC DNA]</scope>
    <source>
        <strain>ATCC 700388 / DSM 13276 / CCUG 48851 / CIP 106301 / E264</strain>
    </source>
</reference>
<organism>
    <name type="scientific">Burkholderia thailandensis (strain ATCC 700388 / DSM 13276 / CCUG 48851 / CIP 106301 / E264)</name>
    <dbReference type="NCBI Taxonomy" id="271848"/>
    <lineage>
        <taxon>Bacteria</taxon>
        <taxon>Pseudomonadati</taxon>
        <taxon>Pseudomonadota</taxon>
        <taxon>Betaproteobacteria</taxon>
        <taxon>Burkholderiales</taxon>
        <taxon>Burkholderiaceae</taxon>
        <taxon>Burkholderia</taxon>
        <taxon>pseudomallei group</taxon>
    </lineage>
</organism>
<protein>
    <recommendedName>
        <fullName evidence="1">Nod factor export ATP-binding protein I</fullName>
        <ecNumber evidence="1">7.6.2.-</ecNumber>
    </recommendedName>
    <alternativeName>
        <fullName evidence="1">Nodulation ATP-binding protein I</fullName>
    </alternativeName>
</protein>
<accession>Q2SVP3</accession>
<sequence length="304" mass="33864">MSVAPIDFQQVEKRYDDKLVVDGLSFHVQPGECFGLLGPNGAGKTTALKMLLGITHPDAGSISLCGEPVPSRARHARRRVGVVPQFDNLDPDFTVRENLLVFARYFGLAAHEARALVPPLLEFAKLENKADAKVGELSGGMKRRLTLARALVNNPDVLVLDEPTTGLDPQARHLMWERLRSLLVRGKTILLTTHFMEEAERLCHRLCVIEEGRKIAEGAPRTLIESEIGCDVIEIYGPDPAQLREELAPFAERTEISGETLFCYVDDPEPVNARLKGRAGLRYLHRPANLEDVFLRLTGREMQD</sequence>
<comment type="function">
    <text evidence="1">Part of the ABC transporter complex NodIJ involved in the export of the nodulation factors (Nod factors), the bacterial signal molecules that induce symbiosis and subsequent nodulation induction. Nod factors are LCO (lipo-chitin oligosaccharide), a modified beta-1,4-linked N-acetylglucosamine oligosaccharide. This subunit is responsible for energy coupling to the transport system.</text>
</comment>
<comment type="subunit">
    <text evidence="1">The complex is composed of two ATP-binding proteins (NodI) and two transmembrane proteins (NodJ).</text>
</comment>
<comment type="subcellular location">
    <subcellularLocation>
        <location evidence="1">Cell inner membrane</location>
        <topology evidence="1">Peripheral membrane protein</topology>
    </subcellularLocation>
</comment>
<comment type="similarity">
    <text evidence="1">Belongs to the ABC transporter superfamily. Lipooligosaccharide exporter (TC 3.A.1.102) family.</text>
</comment>
<comment type="sequence caution" evidence="2">
    <conflict type="erroneous initiation">
        <sequence resource="EMBL-CDS" id="ABC36763"/>
    </conflict>
</comment>
<feature type="chain" id="PRO_0000272600" description="Nod factor export ATP-binding protein I">
    <location>
        <begin position="1"/>
        <end position="304"/>
    </location>
</feature>
<feature type="domain" description="ABC transporter" evidence="1">
    <location>
        <begin position="6"/>
        <end position="236"/>
    </location>
</feature>
<feature type="binding site" evidence="1">
    <location>
        <begin position="38"/>
        <end position="45"/>
    </location>
    <ligand>
        <name>ATP</name>
        <dbReference type="ChEBI" id="CHEBI:30616"/>
    </ligand>
</feature>
<evidence type="ECO:0000255" key="1">
    <source>
        <dbReference type="HAMAP-Rule" id="MF_01704"/>
    </source>
</evidence>
<evidence type="ECO:0000305" key="2"/>
<proteinExistence type="inferred from homology"/>
<dbReference type="EC" id="7.6.2.-" evidence="1"/>
<dbReference type="EMBL" id="CP000086">
    <property type="protein sequence ID" value="ABC36763.1"/>
    <property type="status" value="ALT_INIT"/>
    <property type="molecule type" value="Genomic_DNA"/>
</dbReference>
<dbReference type="RefSeq" id="WP_009891327.1">
    <property type="nucleotide sequence ID" value="NZ_CP008785.1"/>
</dbReference>
<dbReference type="SMR" id="Q2SVP3"/>
<dbReference type="KEGG" id="bte:BTH_I2485"/>
<dbReference type="HOGENOM" id="CLU_000604_1_2_4"/>
<dbReference type="Proteomes" id="UP000001930">
    <property type="component" value="Chromosome I"/>
</dbReference>
<dbReference type="GO" id="GO:0005886">
    <property type="term" value="C:plasma membrane"/>
    <property type="evidence" value="ECO:0007669"/>
    <property type="project" value="UniProtKB-SubCell"/>
</dbReference>
<dbReference type="GO" id="GO:0005524">
    <property type="term" value="F:ATP binding"/>
    <property type="evidence" value="ECO:0007669"/>
    <property type="project" value="UniProtKB-KW"/>
</dbReference>
<dbReference type="GO" id="GO:0016887">
    <property type="term" value="F:ATP hydrolysis activity"/>
    <property type="evidence" value="ECO:0007669"/>
    <property type="project" value="InterPro"/>
</dbReference>
<dbReference type="GO" id="GO:0022857">
    <property type="term" value="F:transmembrane transporter activity"/>
    <property type="evidence" value="ECO:0007669"/>
    <property type="project" value="InterPro"/>
</dbReference>
<dbReference type="CDD" id="cd03263">
    <property type="entry name" value="ABC_subfamily_A"/>
    <property type="match status" value="1"/>
</dbReference>
<dbReference type="FunFam" id="3.40.50.300:FF:000589">
    <property type="entry name" value="ABC transporter, ATP-binding subunit"/>
    <property type="match status" value="1"/>
</dbReference>
<dbReference type="Gene3D" id="3.40.50.300">
    <property type="entry name" value="P-loop containing nucleotide triphosphate hydrolases"/>
    <property type="match status" value="1"/>
</dbReference>
<dbReference type="InterPro" id="IPR003593">
    <property type="entry name" value="AAA+_ATPase"/>
</dbReference>
<dbReference type="InterPro" id="IPR003439">
    <property type="entry name" value="ABC_transporter-like_ATP-bd"/>
</dbReference>
<dbReference type="InterPro" id="IPR017871">
    <property type="entry name" value="ABC_transporter-like_CS"/>
</dbReference>
<dbReference type="InterPro" id="IPR050763">
    <property type="entry name" value="ABC_transporter_ATP-binding"/>
</dbReference>
<dbReference type="InterPro" id="IPR005978">
    <property type="entry name" value="ABC_transptNodI"/>
</dbReference>
<dbReference type="InterPro" id="IPR027417">
    <property type="entry name" value="P-loop_NTPase"/>
</dbReference>
<dbReference type="NCBIfam" id="TIGR01288">
    <property type="entry name" value="nodI"/>
    <property type="match status" value="1"/>
</dbReference>
<dbReference type="NCBIfam" id="NF010060">
    <property type="entry name" value="PRK13537.1"/>
    <property type="match status" value="1"/>
</dbReference>
<dbReference type="PANTHER" id="PTHR42711">
    <property type="entry name" value="ABC TRANSPORTER ATP-BINDING PROTEIN"/>
    <property type="match status" value="1"/>
</dbReference>
<dbReference type="PANTHER" id="PTHR42711:SF5">
    <property type="entry name" value="ABC TRANSPORTER ATP-BINDING PROTEIN NATA"/>
    <property type="match status" value="1"/>
</dbReference>
<dbReference type="Pfam" id="PF00005">
    <property type="entry name" value="ABC_tran"/>
    <property type="match status" value="1"/>
</dbReference>
<dbReference type="SMART" id="SM00382">
    <property type="entry name" value="AAA"/>
    <property type="match status" value="1"/>
</dbReference>
<dbReference type="SUPFAM" id="SSF52540">
    <property type="entry name" value="P-loop containing nucleoside triphosphate hydrolases"/>
    <property type="match status" value="1"/>
</dbReference>
<dbReference type="PROSITE" id="PS00211">
    <property type="entry name" value="ABC_TRANSPORTER_1"/>
    <property type="match status" value="1"/>
</dbReference>
<dbReference type="PROSITE" id="PS50893">
    <property type="entry name" value="ABC_TRANSPORTER_2"/>
    <property type="match status" value="1"/>
</dbReference>
<dbReference type="PROSITE" id="PS51240">
    <property type="entry name" value="NODI"/>
    <property type="match status" value="1"/>
</dbReference>